<keyword id="KW-0687">Ribonucleoprotein</keyword>
<keyword id="KW-0689">Ribosomal protein</keyword>
<gene>
    <name evidence="1" type="primary">rpsP</name>
    <name type="ordered locus">Bcep18194_A4183</name>
</gene>
<sequence>MVIIRLARGGSKKRPFYNIVATDSRNRRDGRFIERVGFYNPVATKGESLRIAQDRLTYWQGVGAQLSPTVQRLVKEAQKAQPAA</sequence>
<proteinExistence type="inferred from homology"/>
<name>RS16_BURL3</name>
<organism>
    <name type="scientific">Burkholderia lata (strain ATCC 17760 / DSM 23089 / LMG 22485 / NCIMB 9086 / R18194 / 383)</name>
    <dbReference type="NCBI Taxonomy" id="482957"/>
    <lineage>
        <taxon>Bacteria</taxon>
        <taxon>Pseudomonadati</taxon>
        <taxon>Pseudomonadota</taxon>
        <taxon>Betaproteobacteria</taxon>
        <taxon>Burkholderiales</taxon>
        <taxon>Burkholderiaceae</taxon>
        <taxon>Burkholderia</taxon>
        <taxon>Burkholderia cepacia complex</taxon>
    </lineage>
</organism>
<evidence type="ECO:0000255" key="1">
    <source>
        <dbReference type="HAMAP-Rule" id="MF_00385"/>
    </source>
</evidence>
<evidence type="ECO:0000305" key="2"/>
<accession>Q39ID6</accession>
<dbReference type="EMBL" id="CP000151">
    <property type="protein sequence ID" value="ABB07780.1"/>
    <property type="molecule type" value="Genomic_DNA"/>
</dbReference>
<dbReference type="RefSeq" id="WP_006476550.1">
    <property type="nucleotide sequence ID" value="NZ_WNDV01000026.1"/>
</dbReference>
<dbReference type="SMR" id="Q39ID6"/>
<dbReference type="GeneID" id="98102517"/>
<dbReference type="KEGG" id="bur:Bcep18194_A4183"/>
<dbReference type="HOGENOM" id="CLU_100590_5_1_4"/>
<dbReference type="Proteomes" id="UP000002705">
    <property type="component" value="Chromosome 1"/>
</dbReference>
<dbReference type="GO" id="GO:0005737">
    <property type="term" value="C:cytoplasm"/>
    <property type="evidence" value="ECO:0007669"/>
    <property type="project" value="UniProtKB-ARBA"/>
</dbReference>
<dbReference type="GO" id="GO:0015935">
    <property type="term" value="C:small ribosomal subunit"/>
    <property type="evidence" value="ECO:0007669"/>
    <property type="project" value="TreeGrafter"/>
</dbReference>
<dbReference type="GO" id="GO:0003735">
    <property type="term" value="F:structural constituent of ribosome"/>
    <property type="evidence" value="ECO:0007669"/>
    <property type="project" value="InterPro"/>
</dbReference>
<dbReference type="GO" id="GO:0006412">
    <property type="term" value="P:translation"/>
    <property type="evidence" value="ECO:0007669"/>
    <property type="project" value="UniProtKB-UniRule"/>
</dbReference>
<dbReference type="Gene3D" id="3.30.1320.10">
    <property type="match status" value="1"/>
</dbReference>
<dbReference type="HAMAP" id="MF_00385">
    <property type="entry name" value="Ribosomal_bS16"/>
    <property type="match status" value="1"/>
</dbReference>
<dbReference type="InterPro" id="IPR000307">
    <property type="entry name" value="Ribosomal_bS16"/>
</dbReference>
<dbReference type="InterPro" id="IPR023803">
    <property type="entry name" value="Ribosomal_bS16_dom_sf"/>
</dbReference>
<dbReference type="NCBIfam" id="TIGR00002">
    <property type="entry name" value="S16"/>
    <property type="match status" value="1"/>
</dbReference>
<dbReference type="PANTHER" id="PTHR12919">
    <property type="entry name" value="30S RIBOSOMAL PROTEIN S16"/>
    <property type="match status" value="1"/>
</dbReference>
<dbReference type="PANTHER" id="PTHR12919:SF20">
    <property type="entry name" value="SMALL RIBOSOMAL SUBUNIT PROTEIN BS16M"/>
    <property type="match status" value="1"/>
</dbReference>
<dbReference type="Pfam" id="PF00886">
    <property type="entry name" value="Ribosomal_S16"/>
    <property type="match status" value="1"/>
</dbReference>
<dbReference type="SUPFAM" id="SSF54565">
    <property type="entry name" value="Ribosomal protein S16"/>
    <property type="match status" value="1"/>
</dbReference>
<protein>
    <recommendedName>
        <fullName evidence="1">Small ribosomal subunit protein bS16</fullName>
    </recommendedName>
    <alternativeName>
        <fullName evidence="2">30S ribosomal protein S16</fullName>
    </alternativeName>
</protein>
<comment type="similarity">
    <text evidence="1">Belongs to the bacterial ribosomal protein bS16 family.</text>
</comment>
<feature type="chain" id="PRO_0000243788" description="Small ribosomal subunit protein bS16">
    <location>
        <begin position="1"/>
        <end position="84"/>
    </location>
</feature>
<reference key="1">
    <citation type="submission" date="2005-10" db="EMBL/GenBank/DDBJ databases">
        <title>Complete sequence of chromosome 1 of Burkholderia sp. 383.</title>
        <authorList>
            <consortium name="US DOE Joint Genome Institute"/>
            <person name="Copeland A."/>
            <person name="Lucas S."/>
            <person name="Lapidus A."/>
            <person name="Barry K."/>
            <person name="Detter J.C."/>
            <person name="Glavina T."/>
            <person name="Hammon N."/>
            <person name="Israni S."/>
            <person name="Pitluck S."/>
            <person name="Chain P."/>
            <person name="Malfatti S."/>
            <person name="Shin M."/>
            <person name="Vergez L."/>
            <person name="Schmutz J."/>
            <person name="Larimer F."/>
            <person name="Land M."/>
            <person name="Kyrpides N."/>
            <person name="Lykidis A."/>
            <person name="Richardson P."/>
        </authorList>
    </citation>
    <scope>NUCLEOTIDE SEQUENCE [LARGE SCALE GENOMIC DNA]</scope>
    <source>
        <strain>ATCC 17760 / DSM 23089 / LMG 22485 / NCIMB 9086 / R18194 / 383</strain>
    </source>
</reference>